<feature type="chain" id="PRO_0000060873" description="Cytochrome b">
    <location>
        <begin position="1"/>
        <end position="379"/>
    </location>
</feature>
<feature type="transmembrane region" description="Helical" evidence="2">
    <location>
        <begin position="33"/>
        <end position="53"/>
    </location>
</feature>
<feature type="transmembrane region" description="Helical" evidence="2">
    <location>
        <begin position="77"/>
        <end position="98"/>
    </location>
</feature>
<feature type="transmembrane region" description="Helical" evidence="2">
    <location>
        <begin position="113"/>
        <end position="133"/>
    </location>
</feature>
<feature type="transmembrane region" description="Helical" evidence="2">
    <location>
        <begin position="178"/>
        <end position="198"/>
    </location>
</feature>
<feature type="transmembrane region" description="Helical" evidence="2">
    <location>
        <begin position="226"/>
        <end position="246"/>
    </location>
</feature>
<feature type="transmembrane region" description="Helical" evidence="2">
    <location>
        <begin position="288"/>
        <end position="308"/>
    </location>
</feature>
<feature type="transmembrane region" description="Helical" evidence="2">
    <location>
        <begin position="320"/>
        <end position="340"/>
    </location>
</feature>
<feature type="transmembrane region" description="Helical" evidence="2">
    <location>
        <begin position="347"/>
        <end position="367"/>
    </location>
</feature>
<feature type="binding site" description="axial binding residue" evidence="2">
    <location>
        <position position="83"/>
    </location>
    <ligand>
        <name>heme b</name>
        <dbReference type="ChEBI" id="CHEBI:60344"/>
        <label>b562</label>
    </ligand>
    <ligandPart>
        <name>Fe</name>
        <dbReference type="ChEBI" id="CHEBI:18248"/>
    </ligandPart>
</feature>
<feature type="binding site" description="axial binding residue" evidence="2">
    <location>
        <position position="97"/>
    </location>
    <ligand>
        <name>heme b</name>
        <dbReference type="ChEBI" id="CHEBI:60344"/>
        <label>b566</label>
    </ligand>
    <ligandPart>
        <name>Fe</name>
        <dbReference type="ChEBI" id="CHEBI:18248"/>
    </ligandPart>
</feature>
<feature type="binding site" description="axial binding residue" evidence="2">
    <location>
        <position position="182"/>
    </location>
    <ligand>
        <name>heme b</name>
        <dbReference type="ChEBI" id="CHEBI:60344"/>
        <label>b562</label>
    </ligand>
    <ligandPart>
        <name>Fe</name>
        <dbReference type="ChEBI" id="CHEBI:18248"/>
    </ligandPart>
</feature>
<feature type="binding site" description="axial binding residue" evidence="2">
    <location>
        <position position="196"/>
    </location>
    <ligand>
        <name>heme b</name>
        <dbReference type="ChEBI" id="CHEBI:60344"/>
        <label>b566</label>
    </ligand>
    <ligandPart>
        <name>Fe</name>
        <dbReference type="ChEBI" id="CHEBI:18248"/>
    </ligandPart>
</feature>
<feature type="binding site" evidence="2">
    <location>
        <position position="201"/>
    </location>
    <ligand>
        <name>a ubiquinone</name>
        <dbReference type="ChEBI" id="CHEBI:16389"/>
    </ligand>
</feature>
<name>CYB_DAUMA</name>
<reference key="1">
    <citation type="journal article" date="1996" name="Proc. Natl. Acad. Sci. U.S.A.">
        <title>Ancient single origin for Malagasy primates.</title>
        <authorList>
            <person name="Yoder A.D."/>
            <person name="Cartmill M."/>
            <person name="Ruvolo M."/>
            <person name="Smith K."/>
            <person name="Vilgalys R."/>
        </authorList>
    </citation>
    <scope>NUCLEOTIDE SEQUENCE [GENOMIC DNA]</scope>
</reference>
<reference key="2">
    <citation type="submission" date="2003-10" db="EMBL/GenBank/DDBJ databases">
        <title>61 primate SINEs and the evolution of strepsirrhines.</title>
        <authorList>
            <person name="Roos C."/>
            <person name="Schmitz J."/>
            <person name="Zischler H."/>
        </authorList>
    </citation>
    <scope>NUCLEOTIDE SEQUENCE [GENOMIC DNA]</scope>
</reference>
<sequence>MTNIRKTHPLIKIINNSFIDLPTPSNISSWWNFGSLLGTCLILQILTGLFLAMHYTSDTTSAFSSISHICRDVNYGWIIRYLHANGASMFFLCLFIHTGRGLYYGSFTYLETWNIGIILLLTVMATAFMGYVLPWGQMSFWGATVITNLLSATPYIGTSLVEWIWGGFSVDKATLTRFFAFHFILPFIILTLATTHLLFLHESGSNNPSGISSNSDKIPFHPYYTTKDILGLTLLLLFLMTLTLFFPDLLGDPDNYTPANPLNTPPHIKPEWYFLFAYAILRSIPNKLGGVLALVLSILILTCIPLLHTAKQRSMAFRPMSQCLFWILTTDLLTLTWIGGQPVEHPFILIGQAASILYFSIIIILMPMTSLIENKMLKW</sequence>
<organism>
    <name type="scientific">Daubentonia madagascariensis</name>
    <name type="common">Aye-aye</name>
    <name type="synonym">Sciurus madagascariensis</name>
    <dbReference type="NCBI Taxonomy" id="31869"/>
    <lineage>
        <taxon>Eukaryota</taxon>
        <taxon>Metazoa</taxon>
        <taxon>Chordata</taxon>
        <taxon>Craniata</taxon>
        <taxon>Vertebrata</taxon>
        <taxon>Euteleostomi</taxon>
        <taxon>Mammalia</taxon>
        <taxon>Eutheria</taxon>
        <taxon>Euarchontoglires</taxon>
        <taxon>Primates</taxon>
        <taxon>Strepsirrhini</taxon>
        <taxon>Chiromyiformes</taxon>
        <taxon>Daubentoniidae</taxon>
        <taxon>Daubentonia</taxon>
    </lineage>
</organism>
<proteinExistence type="inferred from homology"/>
<evidence type="ECO:0000250" key="1"/>
<evidence type="ECO:0000250" key="2">
    <source>
        <dbReference type="UniProtKB" id="P00157"/>
    </source>
</evidence>
<evidence type="ECO:0000255" key="3">
    <source>
        <dbReference type="PROSITE-ProRule" id="PRU00967"/>
    </source>
</evidence>
<evidence type="ECO:0000255" key="4">
    <source>
        <dbReference type="PROSITE-ProRule" id="PRU00968"/>
    </source>
</evidence>
<geneLocation type="mitochondrion"/>
<accession>Q34341</accession>
<accession>Q34334</accession>
<keyword id="KW-0249">Electron transport</keyword>
<keyword id="KW-0349">Heme</keyword>
<keyword id="KW-0408">Iron</keyword>
<keyword id="KW-0472">Membrane</keyword>
<keyword id="KW-0479">Metal-binding</keyword>
<keyword id="KW-0496">Mitochondrion</keyword>
<keyword id="KW-0999">Mitochondrion inner membrane</keyword>
<keyword id="KW-0679">Respiratory chain</keyword>
<keyword id="KW-0812">Transmembrane</keyword>
<keyword id="KW-1133">Transmembrane helix</keyword>
<keyword id="KW-0813">Transport</keyword>
<keyword id="KW-0830">Ubiquinone</keyword>
<protein>
    <recommendedName>
        <fullName>Cytochrome b</fullName>
    </recommendedName>
    <alternativeName>
        <fullName>Complex III subunit 3</fullName>
    </alternativeName>
    <alternativeName>
        <fullName>Complex III subunit III</fullName>
    </alternativeName>
    <alternativeName>
        <fullName>Cytochrome b-c1 complex subunit 3</fullName>
    </alternativeName>
    <alternativeName>
        <fullName>Ubiquinol-cytochrome-c reductase complex cytochrome b subunit</fullName>
    </alternativeName>
</protein>
<dbReference type="EMBL" id="U53569">
    <property type="protein sequence ID" value="AAC50522.1"/>
    <property type="molecule type" value="Genomic_DNA"/>
</dbReference>
<dbReference type="EMBL" id="AY441444">
    <property type="protein sequence ID" value="AAS00125.1"/>
    <property type="molecule type" value="Genomic_DNA"/>
</dbReference>
<dbReference type="RefSeq" id="YP_001661354.1">
    <property type="nucleotide sequence ID" value="NC_010299.1"/>
</dbReference>
<dbReference type="SMR" id="Q34341"/>
<dbReference type="GeneID" id="5867414"/>
<dbReference type="CTD" id="4519"/>
<dbReference type="GO" id="GO:0005743">
    <property type="term" value="C:mitochondrial inner membrane"/>
    <property type="evidence" value="ECO:0007669"/>
    <property type="project" value="UniProtKB-SubCell"/>
</dbReference>
<dbReference type="GO" id="GO:0045275">
    <property type="term" value="C:respiratory chain complex III"/>
    <property type="evidence" value="ECO:0007669"/>
    <property type="project" value="InterPro"/>
</dbReference>
<dbReference type="GO" id="GO:0046872">
    <property type="term" value="F:metal ion binding"/>
    <property type="evidence" value="ECO:0007669"/>
    <property type="project" value="UniProtKB-KW"/>
</dbReference>
<dbReference type="GO" id="GO:0008121">
    <property type="term" value="F:ubiquinol-cytochrome-c reductase activity"/>
    <property type="evidence" value="ECO:0007669"/>
    <property type="project" value="InterPro"/>
</dbReference>
<dbReference type="GO" id="GO:0006122">
    <property type="term" value="P:mitochondrial electron transport, ubiquinol to cytochrome c"/>
    <property type="evidence" value="ECO:0007669"/>
    <property type="project" value="TreeGrafter"/>
</dbReference>
<dbReference type="CDD" id="cd00290">
    <property type="entry name" value="cytochrome_b_C"/>
    <property type="match status" value="1"/>
</dbReference>
<dbReference type="CDD" id="cd00284">
    <property type="entry name" value="Cytochrome_b_N"/>
    <property type="match status" value="1"/>
</dbReference>
<dbReference type="FunFam" id="1.20.810.10:FF:000002">
    <property type="entry name" value="Cytochrome b"/>
    <property type="match status" value="1"/>
</dbReference>
<dbReference type="Gene3D" id="1.20.810.10">
    <property type="entry name" value="Cytochrome Bc1 Complex, Chain C"/>
    <property type="match status" value="1"/>
</dbReference>
<dbReference type="InterPro" id="IPR005798">
    <property type="entry name" value="Cyt_b/b6_C"/>
</dbReference>
<dbReference type="InterPro" id="IPR036150">
    <property type="entry name" value="Cyt_b/b6_C_sf"/>
</dbReference>
<dbReference type="InterPro" id="IPR005797">
    <property type="entry name" value="Cyt_b/b6_N"/>
</dbReference>
<dbReference type="InterPro" id="IPR027387">
    <property type="entry name" value="Cytb/b6-like_sf"/>
</dbReference>
<dbReference type="InterPro" id="IPR030689">
    <property type="entry name" value="Cytochrome_b"/>
</dbReference>
<dbReference type="InterPro" id="IPR048260">
    <property type="entry name" value="Cytochrome_b_C_euk/bac"/>
</dbReference>
<dbReference type="InterPro" id="IPR048259">
    <property type="entry name" value="Cytochrome_b_N_euk/bac"/>
</dbReference>
<dbReference type="InterPro" id="IPR016174">
    <property type="entry name" value="Di-haem_cyt_TM"/>
</dbReference>
<dbReference type="PANTHER" id="PTHR19271">
    <property type="entry name" value="CYTOCHROME B"/>
    <property type="match status" value="1"/>
</dbReference>
<dbReference type="PANTHER" id="PTHR19271:SF16">
    <property type="entry name" value="CYTOCHROME B"/>
    <property type="match status" value="1"/>
</dbReference>
<dbReference type="Pfam" id="PF00032">
    <property type="entry name" value="Cytochrom_B_C"/>
    <property type="match status" value="1"/>
</dbReference>
<dbReference type="Pfam" id="PF00033">
    <property type="entry name" value="Cytochrome_B"/>
    <property type="match status" value="1"/>
</dbReference>
<dbReference type="PIRSF" id="PIRSF038885">
    <property type="entry name" value="COB"/>
    <property type="match status" value="1"/>
</dbReference>
<dbReference type="SUPFAM" id="SSF81648">
    <property type="entry name" value="a domain/subunit of cytochrome bc1 complex (Ubiquinol-cytochrome c reductase)"/>
    <property type="match status" value="1"/>
</dbReference>
<dbReference type="SUPFAM" id="SSF81342">
    <property type="entry name" value="Transmembrane di-heme cytochromes"/>
    <property type="match status" value="1"/>
</dbReference>
<dbReference type="PROSITE" id="PS51003">
    <property type="entry name" value="CYTB_CTER"/>
    <property type="match status" value="1"/>
</dbReference>
<dbReference type="PROSITE" id="PS51002">
    <property type="entry name" value="CYTB_NTER"/>
    <property type="match status" value="1"/>
</dbReference>
<comment type="function">
    <text evidence="2">Component of the ubiquinol-cytochrome c reductase complex (complex III or cytochrome b-c1 complex) that is part of the mitochondrial respiratory chain. The b-c1 complex mediates electron transfer from ubiquinol to cytochrome c. Contributes to the generation of a proton gradient across the mitochondrial membrane that is then used for ATP synthesis.</text>
</comment>
<comment type="cofactor">
    <cofactor evidence="2">
        <name>heme b</name>
        <dbReference type="ChEBI" id="CHEBI:60344"/>
    </cofactor>
    <text evidence="2">Binds 2 heme b groups non-covalently.</text>
</comment>
<comment type="subunit">
    <text evidence="2">The cytochrome bc1 complex contains 11 subunits: 3 respiratory subunits (MT-CYB, CYC1 and UQCRFS1), 2 core proteins (UQCRC1 and UQCRC2) and 6 low-molecular weight proteins (UQCRH/QCR6, UQCRB/QCR7, UQCRQ/QCR8, UQCR10/QCR9, UQCR11/QCR10 and a cleavage product of UQCRFS1). This cytochrome bc1 complex then forms a dimer.</text>
</comment>
<comment type="subcellular location">
    <subcellularLocation>
        <location evidence="2">Mitochondrion inner membrane</location>
        <topology evidence="2">Multi-pass membrane protein</topology>
    </subcellularLocation>
</comment>
<comment type="miscellaneous">
    <text evidence="1">Heme 1 (or BL or b562) is low-potential and absorbs at about 562 nm, and heme 2 (or BH or b566) is high-potential and absorbs at about 566 nm.</text>
</comment>
<comment type="similarity">
    <text evidence="3 4">Belongs to the cytochrome b family.</text>
</comment>
<comment type="caution">
    <text evidence="2">The full-length protein contains only eight transmembrane helices, not nine as predicted by bioinformatics tools.</text>
</comment>
<gene>
    <name type="primary">MT-CYB</name>
    <name type="synonym">COB</name>
    <name type="synonym">CYTB</name>
    <name type="synonym">MTCYB</name>
</gene>